<reference evidence="2 3" key="1">
    <citation type="journal article" date="2008" name="Appl. Environ. Microbiol.">
        <title>Isolation and characterization of carnocyclin a, a novel circular bacteriocin produced by Carnobacterium maltaromaticum UAL307.</title>
        <authorList>
            <person name="Martin-Visscher L.A."/>
            <person name="van Belkum M.J."/>
            <person name="Garneau-Tsodikova S."/>
            <person name="Whittal R.M."/>
            <person name="Zheng J."/>
            <person name="McMullen L.M."/>
            <person name="Vederas J.C."/>
        </authorList>
    </citation>
    <scope>NUCLEOTIDE SEQUENCE [MRNA]</scope>
    <scope>PROTEIN SEQUENCE OF 5-64</scope>
    <scope>FUNCTION</scope>
    <scope>BIOPHYSICOCHEMICAL PROPERTIES</scope>
    <scope>SUBCELLULAR LOCATION</scope>
    <scope>MASS SPECTROMETRY</scope>
    <source>
        <strain evidence="3">UAL307</strain>
    </source>
</reference>
<organism>
    <name type="scientific">Carnobacterium maltaromaticum</name>
    <name type="common">Carnobacterium piscicola</name>
    <dbReference type="NCBI Taxonomy" id="2751"/>
    <lineage>
        <taxon>Bacteria</taxon>
        <taxon>Bacillati</taxon>
        <taxon>Bacillota</taxon>
        <taxon>Bacilli</taxon>
        <taxon>Lactobacillales</taxon>
        <taxon>Carnobacteriaceae</taxon>
        <taxon>Carnobacterium</taxon>
    </lineage>
</organism>
<sequence>MLYELVAYGIAQGTAEKVVSLINAGLTVGSIISILGGVTVGLSGVFTAVKAAIAKQGIKKAIQL</sequence>
<comment type="function">
    <text evidence="1">Cyclopeptide antibiotic that inhibits the growth of Gram-positive bacteria, but has no effect on the growth of Gram-negative bacteria.</text>
</comment>
<comment type="biophysicochemical properties">
    <phDependence>
        <text evidence="1">Stable from pH 2 to 12.</text>
    </phDependence>
    <temperatureDependence>
        <text evidence="1">Displays a high degree of stability when incubated at temperatures between -80 and 75 degrees Celsius for 60 minutes. Autoclaving the peptide at 121 degrees Celsius for 15 minutes had no effect but incubation at 100 degrees Celsius for 60 minutes caused a 32-fold reduction in activity.</text>
    </temperatureDependence>
</comment>
<comment type="subcellular location">
    <subcellularLocation>
        <location evidence="1">Secreted</location>
    </subcellularLocation>
</comment>
<comment type="mass spectrometry"/>
<proteinExistence type="evidence at protein level"/>
<protein>
    <recommendedName>
        <fullName>Carnocyclin-A</fullName>
    </recommendedName>
</protein>
<name>CCLA_CARML</name>
<dbReference type="EMBL" id="EU624394">
    <property type="protein sequence ID" value="ACC93994.1"/>
    <property type="molecule type" value="Genomic_DNA"/>
</dbReference>
<dbReference type="RefSeq" id="WP_283644793.1">
    <property type="nucleotide sequence ID" value="NZ_OX460976.1"/>
</dbReference>
<dbReference type="PDB" id="2KJF">
    <property type="method" value="NMR"/>
    <property type="chains" value="A=5-64"/>
</dbReference>
<dbReference type="PDBsum" id="2KJF"/>
<dbReference type="BMRB" id="B2MVM5"/>
<dbReference type="SMR" id="B2MVM5"/>
<dbReference type="TCDB" id="1.C.90.1.1">
    <property type="family name" value="the carnocyclin a (carnocyclin) family"/>
</dbReference>
<dbReference type="GeneID" id="83607570"/>
<dbReference type="EvolutionaryTrace" id="B2MVM5"/>
<dbReference type="GO" id="GO:0005576">
    <property type="term" value="C:extracellular region"/>
    <property type="evidence" value="ECO:0000314"/>
    <property type="project" value="UniProtKB"/>
</dbReference>
<dbReference type="GO" id="GO:0050830">
    <property type="term" value="P:defense response to Gram-positive bacterium"/>
    <property type="evidence" value="ECO:0000314"/>
    <property type="project" value="UniProtKB"/>
</dbReference>
<dbReference type="GO" id="GO:0031640">
    <property type="term" value="P:killing of cells of another organism"/>
    <property type="evidence" value="ECO:0007669"/>
    <property type="project" value="UniProtKB-KW"/>
</dbReference>
<dbReference type="CDD" id="cd22563">
    <property type="entry name" value="CclA"/>
    <property type="match status" value="1"/>
</dbReference>
<dbReference type="Gene3D" id="1.20.225.10">
    <property type="entry name" value="Bacteriocin AS-48"/>
    <property type="match status" value="1"/>
</dbReference>
<dbReference type="InterPro" id="IPR009086">
    <property type="entry name" value="Bacteriocin_AS48"/>
</dbReference>
<dbReference type="InterPro" id="IPR020038">
    <property type="entry name" value="Circ_bacteriocin"/>
</dbReference>
<dbReference type="NCBIfam" id="TIGR03651">
    <property type="entry name" value="circ_ocin_uber"/>
    <property type="match status" value="1"/>
</dbReference>
<dbReference type="Pfam" id="PF09221">
    <property type="entry name" value="Bacteriocin_IId"/>
    <property type="match status" value="1"/>
</dbReference>
<feature type="propeptide" id="PRO_0000361696" evidence="1">
    <location>
        <begin position="1"/>
        <end position="4"/>
    </location>
</feature>
<feature type="peptide" id="PRO_0000361697" description="Carnocyclin-A">
    <location>
        <begin position="5"/>
        <end position="64"/>
    </location>
</feature>
<feature type="cross-link" description="Cyclopeptide (Leu-Leu)" evidence="1">
    <location>
        <begin position="5"/>
        <end position="64"/>
    </location>
</feature>
<feature type="sequence conflict" description="In Ref. 1; AA sequence." evidence="2" ref="1">
    <original>I</original>
    <variation>L</variation>
    <location>
        <position position="32"/>
    </location>
</feature>
<feature type="turn" evidence="4">
    <location>
        <begin position="6"/>
        <end position="9"/>
    </location>
</feature>
<feature type="helix" evidence="4">
    <location>
        <begin position="12"/>
        <end position="22"/>
    </location>
</feature>
<feature type="turn" evidence="4">
    <location>
        <begin position="23"/>
        <end position="25"/>
    </location>
</feature>
<feature type="helix" evidence="4">
    <location>
        <begin position="28"/>
        <end position="35"/>
    </location>
</feature>
<feature type="turn" evidence="4">
    <location>
        <begin position="40"/>
        <end position="42"/>
    </location>
</feature>
<feature type="helix" evidence="4">
    <location>
        <begin position="43"/>
        <end position="55"/>
    </location>
</feature>
<feature type="helix" evidence="4">
    <location>
        <begin position="58"/>
        <end position="63"/>
    </location>
</feature>
<evidence type="ECO:0000269" key="1">
    <source>
    </source>
</evidence>
<evidence type="ECO:0000305" key="2"/>
<evidence type="ECO:0000312" key="3">
    <source>
        <dbReference type="EMBL" id="ACC93994.1"/>
    </source>
</evidence>
<evidence type="ECO:0007829" key="4">
    <source>
        <dbReference type="PDB" id="2KJF"/>
    </source>
</evidence>
<gene>
    <name evidence="3" type="primary">cclA</name>
</gene>
<keyword id="KW-0002">3D-structure</keyword>
<keyword id="KW-0044">Antibiotic</keyword>
<keyword id="KW-0929">Antimicrobial</keyword>
<keyword id="KW-0078">Bacteriocin</keyword>
<keyword id="KW-0903">Direct protein sequencing</keyword>
<keyword id="KW-0964">Secreted</keyword>
<accession>B2MVM5</accession>